<dbReference type="EC" id="7.2.1.4" evidence="1"/>
<dbReference type="EMBL" id="CP000743">
    <property type="protein sequence ID" value="ABR56848.1"/>
    <property type="molecule type" value="Genomic_DNA"/>
</dbReference>
<dbReference type="RefSeq" id="WP_011973980.1">
    <property type="nucleotide sequence ID" value="NC_009635.1"/>
</dbReference>
<dbReference type="SMR" id="A6UWH6"/>
<dbReference type="STRING" id="419665.Maeo_1272"/>
<dbReference type="GeneID" id="5326678"/>
<dbReference type="KEGG" id="mae:Maeo_1272"/>
<dbReference type="eggNOG" id="arCOG04867">
    <property type="taxonomic scope" value="Archaea"/>
</dbReference>
<dbReference type="HOGENOM" id="CLU_171544_0_0_2"/>
<dbReference type="OrthoDB" id="114034at2157"/>
<dbReference type="UniPathway" id="UPA00640">
    <property type="reaction ID" value="UER00698"/>
</dbReference>
<dbReference type="Proteomes" id="UP000001106">
    <property type="component" value="Chromosome"/>
</dbReference>
<dbReference type="GO" id="GO:0005886">
    <property type="term" value="C:plasma membrane"/>
    <property type="evidence" value="ECO:0007669"/>
    <property type="project" value="UniProtKB-SubCell"/>
</dbReference>
<dbReference type="GO" id="GO:0030269">
    <property type="term" value="F:tetrahydromethanopterin S-methyltransferase activity"/>
    <property type="evidence" value="ECO:0007669"/>
    <property type="project" value="UniProtKB-UniRule"/>
</dbReference>
<dbReference type="GO" id="GO:0019386">
    <property type="term" value="P:methanogenesis, from carbon dioxide"/>
    <property type="evidence" value="ECO:0007669"/>
    <property type="project" value="UniProtKB-UniRule"/>
</dbReference>
<dbReference type="GO" id="GO:0032259">
    <property type="term" value="P:methylation"/>
    <property type="evidence" value="ECO:0007669"/>
    <property type="project" value="UniProtKB-KW"/>
</dbReference>
<dbReference type="GO" id="GO:0006730">
    <property type="term" value="P:one-carbon metabolic process"/>
    <property type="evidence" value="ECO:0007669"/>
    <property type="project" value="UniProtKB-UniRule"/>
</dbReference>
<dbReference type="HAMAP" id="MF_01094">
    <property type="entry name" value="MtrB"/>
    <property type="match status" value="1"/>
</dbReference>
<dbReference type="InterPro" id="IPR008690">
    <property type="entry name" value="MtrB_MeTrfase"/>
</dbReference>
<dbReference type="NCBIfam" id="TIGR04166">
    <property type="entry name" value="methano_MtrB"/>
    <property type="match status" value="1"/>
</dbReference>
<dbReference type="NCBIfam" id="NF002129">
    <property type="entry name" value="PRK00965.1"/>
    <property type="match status" value="1"/>
</dbReference>
<dbReference type="Pfam" id="PF05440">
    <property type="entry name" value="MtrB"/>
    <property type="match status" value="1"/>
</dbReference>
<dbReference type="PIRSF" id="PIRSF005518">
    <property type="entry name" value="MtrB"/>
    <property type="match status" value="1"/>
</dbReference>
<gene>
    <name evidence="1" type="primary">mtrB</name>
    <name type="ordered locus">Maeo_1272</name>
</gene>
<organism>
    <name type="scientific">Methanococcus aeolicus (strain ATCC BAA-1280 / DSM 17508 / OCM 812 / Nankai-3)</name>
    <dbReference type="NCBI Taxonomy" id="419665"/>
    <lineage>
        <taxon>Archaea</taxon>
        <taxon>Methanobacteriati</taxon>
        <taxon>Methanobacteriota</taxon>
        <taxon>Methanomada group</taxon>
        <taxon>Methanococci</taxon>
        <taxon>Methanococcales</taxon>
        <taxon>Methanococcaceae</taxon>
        <taxon>Methanococcus</taxon>
    </lineage>
</organism>
<evidence type="ECO:0000255" key="1">
    <source>
        <dbReference type="HAMAP-Rule" id="MF_01094"/>
    </source>
</evidence>
<comment type="function">
    <text evidence="1">Part of a complex that catalyzes the formation of methyl-coenzyme M and tetrahydromethanopterin from coenzyme M and methyl-tetrahydromethanopterin. This is an energy-conserving, sodium-ion translocating step.</text>
</comment>
<comment type="catalytic activity">
    <reaction evidence="1">
        <text>5-methyl-5,6,7,8-tetrahydromethanopterin + coenzyme M + 2 Na(+)(in) = 5,6,7,8-tetrahydromethanopterin + methyl-coenzyme M + 2 Na(+)(out)</text>
        <dbReference type="Rhea" id="RHEA:53492"/>
        <dbReference type="ChEBI" id="CHEBI:29101"/>
        <dbReference type="ChEBI" id="CHEBI:58103"/>
        <dbReference type="ChEBI" id="CHEBI:58116"/>
        <dbReference type="ChEBI" id="CHEBI:58286"/>
        <dbReference type="ChEBI" id="CHEBI:58319"/>
        <dbReference type="EC" id="7.2.1.4"/>
    </reaction>
</comment>
<comment type="pathway">
    <text evidence="1">One-carbon metabolism; methanogenesis from CO(2); methyl-coenzyme M from 5,10-methylene-5,6,7,8-tetrahydromethanopterin: step 2/2.</text>
</comment>
<comment type="subunit">
    <text evidence="1">The complex is composed of 8 subunits; MtrA, MtrB, MtrC, MtrD, MtrE, MtrF, MtrG and MtrH.</text>
</comment>
<comment type="subcellular location">
    <subcellularLocation>
        <location evidence="1">Cell membrane</location>
        <topology evidence="1">Single-pass membrane protein</topology>
    </subcellularLocation>
</comment>
<comment type="similarity">
    <text evidence="1">Belongs to the MtrB family.</text>
</comment>
<protein>
    <recommendedName>
        <fullName evidence="1">Tetrahydromethanopterin S-methyltransferase subunit B</fullName>
        <ecNumber evidence="1">7.2.1.4</ecNumber>
    </recommendedName>
    <alternativeName>
        <fullName evidence="1">N5-methyltetrahydromethanopterin--coenzyme M methyltransferase subunit B</fullName>
    </alternativeName>
</protein>
<reference key="1">
    <citation type="submission" date="2007-06" db="EMBL/GenBank/DDBJ databases">
        <title>Complete sequence of Methanococcus aeolicus Nankai-3.</title>
        <authorList>
            <consortium name="US DOE Joint Genome Institute"/>
            <person name="Copeland A."/>
            <person name="Lucas S."/>
            <person name="Lapidus A."/>
            <person name="Barry K."/>
            <person name="Glavina del Rio T."/>
            <person name="Dalin E."/>
            <person name="Tice H."/>
            <person name="Pitluck S."/>
            <person name="Chain P."/>
            <person name="Malfatti S."/>
            <person name="Shin M."/>
            <person name="Vergez L."/>
            <person name="Schmutz J."/>
            <person name="Larimer F."/>
            <person name="Land M."/>
            <person name="Hauser L."/>
            <person name="Kyrpides N."/>
            <person name="Lykidis A."/>
            <person name="Sieprawska-Lupa M."/>
            <person name="Whitman W.B."/>
            <person name="Richardson P."/>
        </authorList>
    </citation>
    <scope>NUCLEOTIDE SEQUENCE [LARGE SCALE GENOMIC DNA]</scope>
    <source>
        <strain>ATCC BAA-1280 / DSM 17508 / OCM 812 / Nankai-3</strain>
    </source>
</reference>
<sequence length="108" mass="11928">MELVKICPEIGIVMDVDTGIVAEMRKDILVVDLNPIKEEINKLETLSKAFENSLDPRSAPLKAYDGRDNIYSVGGLFQSAFFGFWISLSILTLGLILVIGLYPKLIGL</sequence>
<feature type="chain" id="PRO_1000064934" description="Tetrahydromethanopterin S-methyltransferase subunit B">
    <location>
        <begin position="1"/>
        <end position="108"/>
    </location>
</feature>
<feature type="transmembrane region" description="Helical" evidence="1">
    <location>
        <begin position="81"/>
        <end position="101"/>
    </location>
</feature>
<accession>A6UWH6</accession>
<name>MTRB_META3</name>
<keyword id="KW-1003">Cell membrane</keyword>
<keyword id="KW-0472">Membrane</keyword>
<keyword id="KW-0484">Methanogenesis</keyword>
<keyword id="KW-0489">Methyltransferase</keyword>
<keyword id="KW-0554">One-carbon metabolism</keyword>
<keyword id="KW-0808">Transferase</keyword>
<keyword id="KW-1278">Translocase</keyword>
<keyword id="KW-0812">Transmembrane</keyword>
<keyword id="KW-1133">Transmembrane helix</keyword>
<proteinExistence type="inferred from homology"/>